<organism>
    <name type="scientific">Salinispora arenicola (strain CNS-205)</name>
    <dbReference type="NCBI Taxonomy" id="391037"/>
    <lineage>
        <taxon>Bacteria</taxon>
        <taxon>Bacillati</taxon>
        <taxon>Actinomycetota</taxon>
        <taxon>Actinomycetes</taxon>
        <taxon>Micromonosporales</taxon>
        <taxon>Micromonosporaceae</taxon>
        <taxon>Salinispora</taxon>
    </lineage>
</organism>
<keyword id="KW-0175">Coiled coil</keyword>
<keyword id="KW-1017">Isopeptide bond</keyword>
<keyword id="KW-0833">Ubl conjugation pathway</keyword>
<protein>
    <recommendedName>
        <fullName evidence="1">Prokaryotic ubiquitin-like protein Pup</fullName>
    </recommendedName>
    <alternativeName>
        <fullName evidence="1">Bacterial ubiquitin-like modifier</fullName>
    </alternativeName>
</protein>
<accession>A8M2A2</accession>
<dbReference type="EMBL" id="CP000850">
    <property type="protein sequence ID" value="ABV98218.1"/>
    <property type="molecule type" value="Genomic_DNA"/>
</dbReference>
<dbReference type="SMR" id="A8M2A2"/>
<dbReference type="STRING" id="391037.Sare_2360"/>
<dbReference type="KEGG" id="saq:Sare_2360"/>
<dbReference type="PATRIC" id="fig|391037.6.peg.2393"/>
<dbReference type="eggNOG" id="ENOG50333JS">
    <property type="taxonomic scope" value="Bacteria"/>
</dbReference>
<dbReference type="HOGENOM" id="CLU_183816_2_0_11"/>
<dbReference type="OrthoDB" id="3254977at2"/>
<dbReference type="UniPathway" id="UPA00997"/>
<dbReference type="GO" id="GO:0070628">
    <property type="term" value="F:proteasome binding"/>
    <property type="evidence" value="ECO:0007669"/>
    <property type="project" value="UniProtKB-UniRule"/>
</dbReference>
<dbReference type="GO" id="GO:0031386">
    <property type="term" value="F:protein tag activity"/>
    <property type="evidence" value="ECO:0007669"/>
    <property type="project" value="UniProtKB-UniRule"/>
</dbReference>
<dbReference type="GO" id="GO:0019941">
    <property type="term" value="P:modification-dependent protein catabolic process"/>
    <property type="evidence" value="ECO:0007669"/>
    <property type="project" value="UniProtKB-UniRule"/>
</dbReference>
<dbReference type="GO" id="GO:0010498">
    <property type="term" value="P:proteasomal protein catabolic process"/>
    <property type="evidence" value="ECO:0007669"/>
    <property type="project" value="UniProtKB-UniRule"/>
</dbReference>
<dbReference type="GO" id="GO:0070490">
    <property type="term" value="P:protein pupylation"/>
    <property type="evidence" value="ECO:0007669"/>
    <property type="project" value="UniProtKB-UniRule"/>
</dbReference>
<dbReference type="HAMAP" id="MF_02106">
    <property type="entry name" value="Pup"/>
    <property type="match status" value="1"/>
</dbReference>
<dbReference type="InterPro" id="IPR008515">
    <property type="entry name" value="Ubiquitin-like_Pup"/>
</dbReference>
<dbReference type="NCBIfam" id="TIGR03687">
    <property type="entry name" value="pupylate_cterm"/>
    <property type="match status" value="1"/>
</dbReference>
<dbReference type="Pfam" id="PF05639">
    <property type="entry name" value="Pup"/>
    <property type="match status" value="1"/>
</dbReference>
<evidence type="ECO:0000255" key="1">
    <source>
        <dbReference type="HAMAP-Rule" id="MF_02106"/>
    </source>
</evidence>
<evidence type="ECO:0000256" key="2">
    <source>
        <dbReference type="SAM" id="MobiDB-lite"/>
    </source>
</evidence>
<name>PUP_SALAI</name>
<comment type="function">
    <text evidence="1">Protein modifier that is covalently attached to lysine residues of substrate proteins, thereby targeting them for proteasomal degradation. The tagging system is termed pupylation.</text>
</comment>
<comment type="pathway">
    <text evidence="1">Protein degradation; proteasomal Pup-dependent pathway.</text>
</comment>
<comment type="subunit">
    <text evidence="1">Strongly interacts with the proteasome-associated ATPase ARC through a hydrophobic interface; the interacting region of Pup lies in its C-terminal half. There is one Pup binding site per ARC hexamer ring.</text>
</comment>
<comment type="domain">
    <text evidence="1">The N-terminal unstructured half of Pup provides a signal required to initiate unfolding and degradation by the proteasome but is not needed for pupylation, while the C-terminal helical half of Pup interacts with ARC to target proteins to the proteasome.</text>
</comment>
<comment type="similarity">
    <text evidence="1">Belongs to the prokaryotic ubiquitin-like protein family.</text>
</comment>
<sequence>MATRDSGGQSQTGRSQQGEEIEDVTTEASPEVAERHAEITEDVDDLLDEIDSVLEENAEEFVRGYVQKGGE</sequence>
<gene>
    <name evidence="1" type="primary">pup</name>
    <name type="ordered locus">Sare_2360</name>
</gene>
<feature type="chain" id="PRO_0000390611" description="Prokaryotic ubiquitin-like protein Pup">
    <location>
        <begin position="1"/>
        <end position="71"/>
    </location>
</feature>
<feature type="region of interest" description="Disordered" evidence="2">
    <location>
        <begin position="1"/>
        <end position="42"/>
    </location>
</feature>
<feature type="region of interest" description="ARC ATPase binding" evidence="1">
    <location>
        <begin position="27"/>
        <end position="65"/>
    </location>
</feature>
<feature type="coiled-coil region" evidence="1">
    <location>
        <begin position="31"/>
        <end position="60"/>
    </location>
</feature>
<feature type="compositionally biased region" description="Low complexity" evidence="2">
    <location>
        <begin position="1"/>
        <end position="18"/>
    </location>
</feature>
<feature type="cross-link" description="Isoglutamyl lysine isopeptide (Glu-Lys) (interchain with K-? in acceptor proteins)" evidence="1">
    <location>
        <position position="71"/>
    </location>
</feature>
<reference key="1">
    <citation type="submission" date="2007-10" db="EMBL/GenBank/DDBJ databases">
        <title>Complete sequence of Salinispora arenicola CNS-205.</title>
        <authorList>
            <consortium name="US DOE Joint Genome Institute"/>
            <person name="Copeland A."/>
            <person name="Lucas S."/>
            <person name="Lapidus A."/>
            <person name="Barry K."/>
            <person name="Glavina del Rio T."/>
            <person name="Dalin E."/>
            <person name="Tice H."/>
            <person name="Pitluck S."/>
            <person name="Foster B."/>
            <person name="Schmutz J."/>
            <person name="Larimer F."/>
            <person name="Land M."/>
            <person name="Hauser L."/>
            <person name="Kyrpides N."/>
            <person name="Ivanova N."/>
            <person name="Jensen P.R."/>
            <person name="Moore B.S."/>
            <person name="Penn K."/>
            <person name="Jenkins C."/>
            <person name="Udwary D."/>
            <person name="Xiang L."/>
            <person name="Gontang E."/>
            <person name="Richardson P."/>
        </authorList>
    </citation>
    <scope>NUCLEOTIDE SEQUENCE [LARGE SCALE GENOMIC DNA]</scope>
    <source>
        <strain>CNS-205</strain>
    </source>
</reference>
<proteinExistence type="inferred from homology"/>